<sequence length="295" mass="32902">MRRFLLPVIFVIAAVVYSSIVVVTEGTRGIMLRFNKVQRDADNKVVVYEPGLHFKVPLIDSIKVLDARIRTLDGSATRFVTVEKKDLLVDSYVKWKISDFGRFYTSTGGGDYAQAANLLSRKVNDRLRSEIGSRTIKDIVSGTRGELMEGAKKALSSGQDSTAELGIEVIDVRVKQINLPDEVSSSIYQRMRAERDAVAREHRSQGKEKAAFIQADVDRKVTLILANANKTAQELRGSGDAAAAKLYSDAFAQEPQFFTFVRSLKAYEASFANSDNIMILKPDSDFFRFMQAPKK</sequence>
<organism>
    <name type="scientific">Haemophilus influenzae (strain ATCC 51907 / DSM 11121 / KW20 / Rd)</name>
    <dbReference type="NCBI Taxonomy" id="71421"/>
    <lineage>
        <taxon>Bacteria</taxon>
        <taxon>Pseudomonadati</taxon>
        <taxon>Pseudomonadota</taxon>
        <taxon>Gammaproteobacteria</taxon>
        <taxon>Pasteurellales</taxon>
        <taxon>Pasteurellaceae</taxon>
        <taxon>Haemophilus</taxon>
    </lineage>
</organism>
<keyword id="KW-0472">Membrane</keyword>
<keyword id="KW-1185">Reference proteome</keyword>
<keyword id="KW-0812">Transmembrane</keyword>
<keyword id="KW-1133">Transmembrane helix</keyword>
<gene>
    <name type="primary">hflC</name>
    <name type="ordered locus">HI_0150</name>
</gene>
<name>HFLC_HAEIN</name>
<dbReference type="EMBL" id="L42023">
    <property type="protein sequence ID" value="AAC21821.1"/>
    <property type="molecule type" value="Genomic_DNA"/>
</dbReference>
<dbReference type="PIR" id="I64050">
    <property type="entry name" value="I64050"/>
</dbReference>
<dbReference type="RefSeq" id="NP_438320.1">
    <property type="nucleotide sequence ID" value="NC_000907.1"/>
</dbReference>
<dbReference type="SMR" id="P44545"/>
<dbReference type="STRING" id="71421.HI_0150"/>
<dbReference type="MEROPS" id="I87.001"/>
<dbReference type="EnsemblBacteria" id="AAC21821">
    <property type="protein sequence ID" value="AAC21821"/>
    <property type="gene ID" value="HI_0150"/>
</dbReference>
<dbReference type="KEGG" id="hin:HI_0150"/>
<dbReference type="PATRIC" id="fig|71421.8.peg.153"/>
<dbReference type="eggNOG" id="COG0330">
    <property type="taxonomic scope" value="Bacteria"/>
</dbReference>
<dbReference type="HOGENOM" id="CLU_059167_3_0_6"/>
<dbReference type="OrthoDB" id="9812991at2"/>
<dbReference type="PhylomeDB" id="P44545"/>
<dbReference type="BioCyc" id="HINF71421:G1GJ1-162-MONOMER"/>
<dbReference type="Proteomes" id="UP000000579">
    <property type="component" value="Chromosome"/>
</dbReference>
<dbReference type="GO" id="GO:0016020">
    <property type="term" value="C:membrane"/>
    <property type="evidence" value="ECO:0007669"/>
    <property type="project" value="UniProtKB-SubCell"/>
</dbReference>
<dbReference type="CDD" id="cd03405">
    <property type="entry name" value="SPFH_HflC"/>
    <property type="match status" value="1"/>
</dbReference>
<dbReference type="Gene3D" id="3.30.479.30">
    <property type="entry name" value="Band 7 domain"/>
    <property type="match status" value="1"/>
</dbReference>
<dbReference type="InterPro" id="IPR001107">
    <property type="entry name" value="Band_7"/>
</dbReference>
<dbReference type="InterPro" id="IPR036013">
    <property type="entry name" value="Band_7/SPFH_dom_sf"/>
</dbReference>
<dbReference type="InterPro" id="IPR010200">
    <property type="entry name" value="HflC"/>
</dbReference>
<dbReference type="NCBIfam" id="TIGR01932">
    <property type="entry name" value="hflC"/>
    <property type="match status" value="2"/>
</dbReference>
<dbReference type="PANTHER" id="PTHR42911">
    <property type="entry name" value="MODULATOR OF FTSH PROTEASE HFLC"/>
    <property type="match status" value="1"/>
</dbReference>
<dbReference type="PANTHER" id="PTHR42911:SF1">
    <property type="entry name" value="MODULATOR OF FTSH PROTEASE HFLC"/>
    <property type="match status" value="1"/>
</dbReference>
<dbReference type="Pfam" id="PF01145">
    <property type="entry name" value="Band_7"/>
    <property type="match status" value="1"/>
</dbReference>
<dbReference type="PIRSF" id="PIRSF005651">
    <property type="entry name" value="HflC"/>
    <property type="match status" value="1"/>
</dbReference>
<dbReference type="SMART" id="SM00244">
    <property type="entry name" value="PHB"/>
    <property type="match status" value="1"/>
</dbReference>
<dbReference type="SUPFAM" id="SSF117892">
    <property type="entry name" value="Band 7/SPFH domain"/>
    <property type="match status" value="1"/>
</dbReference>
<reference key="1">
    <citation type="journal article" date="1995" name="Science">
        <title>Whole-genome random sequencing and assembly of Haemophilus influenzae Rd.</title>
        <authorList>
            <person name="Fleischmann R.D."/>
            <person name="Adams M.D."/>
            <person name="White O."/>
            <person name="Clayton R.A."/>
            <person name="Kirkness E.F."/>
            <person name="Kerlavage A.R."/>
            <person name="Bult C.J."/>
            <person name="Tomb J.-F."/>
            <person name="Dougherty B.A."/>
            <person name="Merrick J.M."/>
            <person name="McKenney K."/>
            <person name="Sutton G.G."/>
            <person name="FitzHugh W."/>
            <person name="Fields C.A."/>
            <person name="Gocayne J.D."/>
            <person name="Scott J.D."/>
            <person name="Shirley R."/>
            <person name="Liu L.-I."/>
            <person name="Glodek A."/>
            <person name="Kelley J.M."/>
            <person name="Weidman J.F."/>
            <person name="Phillips C.A."/>
            <person name="Spriggs T."/>
            <person name="Hedblom E."/>
            <person name="Cotton M.D."/>
            <person name="Utterback T.R."/>
            <person name="Hanna M.C."/>
            <person name="Nguyen D.T."/>
            <person name="Saudek D.M."/>
            <person name="Brandon R.C."/>
            <person name="Fine L.D."/>
            <person name="Fritchman J.L."/>
            <person name="Fuhrmann J.L."/>
            <person name="Geoghagen N.S.M."/>
            <person name="Gnehm C.L."/>
            <person name="McDonald L.A."/>
            <person name="Small K.V."/>
            <person name="Fraser C.M."/>
            <person name="Smith H.O."/>
            <person name="Venter J.C."/>
        </authorList>
    </citation>
    <scope>NUCLEOTIDE SEQUENCE [LARGE SCALE GENOMIC DNA]</scope>
    <source>
        <strain>ATCC 51907 / DSM 11121 / KW20 / Rd</strain>
    </source>
</reference>
<feature type="chain" id="PRO_0000094076" description="Protein HflC">
    <location>
        <begin position="1"/>
        <end position="295"/>
    </location>
</feature>
<feature type="transmembrane region" description="Helical" evidence="2">
    <location>
        <begin position="4"/>
        <end position="24"/>
    </location>
</feature>
<comment type="function">
    <text evidence="1">HflC and HflK could regulate a protease.</text>
</comment>
<comment type="subunit">
    <text evidence="1">HflC and HflK may interact to form a multimeric complex.</text>
</comment>
<comment type="subcellular location">
    <subcellularLocation>
        <location evidence="3">Membrane</location>
        <topology evidence="3">Single-pass membrane protein</topology>
    </subcellularLocation>
</comment>
<comment type="similarity">
    <text evidence="3">Belongs to the band 7/mec-2 family. HflC subfamily.</text>
</comment>
<evidence type="ECO:0000250" key="1"/>
<evidence type="ECO:0000255" key="2"/>
<evidence type="ECO:0000305" key="3"/>
<protein>
    <recommendedName>
        <fullName>Protein HflC</fullName>
    </recommendedName>
</protein>
<proteinExistence type="inferred from homology"/>
<accession>P44545</accession>